<proteinExistence type="inferred from homology"/>
<keyword id="KW-0012">Acyltransferase</keyword>
<keyword id="KW-0963">Cytoplasm</keyword>
<keyword id="KW-0583">PHB biosynthesis</keyword>
<keyword id="KW-0808">Transferase</keyword>
<organism>
    <name type="scientific">Thiocystis violacea</name>
    <dbReference type="NCBI Taxonomy" id="13725"/>
    <lineage>
        <taxon>Bacteria</taxon>
        <taxon>Pseudomonadati</taxon>
        <taxon>Pseudomonadota</taxon>
        <taxon>Gammaproteobacteria</taxon>
        <taxon>Chromatiales</taxon>
        <taxon>Chromatiaceae</taxon>
        <taxon>Thiocystis</taxon>
    </lineage>
</organism>
<protein>
    <recommendedName>
        <fullName>Acetyl-CoA acetyltransferase</fullName>
        <ecNumber>2.3.1.9</ecNumber>
    </recommendedName>
    <alternativeName>
        <fullName>Acetoacetyl-CoA thiolase</fullName>
    </alternativeName>
    <alternativeName>
        <fullName evidence="6">Beta-ketothiolase</fullName>
    </alternativeName>
</protein>
<gene>
    <name evidence="5" type="primary">phaA</name>
    <name evidence="6" type="synonym">phbA</name>
</gene>
<name>THIL_THIVI</name>
<feature type="chain" id="PRO_0000206462" description="Acetyl-CoA acetyltransferase">
    <location>
        <begin position="1"/>
        <end position="394"/>
    </location>
</feature>
<feature type="active site" description="Acyl-thioester intermediate" evidence="1">
    <location>
        <position position="89"/>
    </location>
</feature>
<feature type="active site" description="Proton acceptor" evidence="3">
    <location>
        <position position="350"/>
    </location>
</feature>
<feature type="active site" description="Proton acceptor" evidence="3">
    <location>
        <position position="380"/>
    </location>
</feature>
<sequence>MSDTIVIVDAGRTAIGTFGGALSALQATDIGTTVLKALIERTGIAPEQVSEVILGQVLTAGCGQNPARQTTLMAGLPHTVPAMTINKVCGSGLKAVHLAMQAVACGDAEIVIAGGQESMSQSSHVLPRSREGQRMGDWPMKDTMIVDGLWDAFNQCHMGVTAENIAKKYAFTREAQDAFAAASQQKAEAAIQSGRFADEIIPVSIPQRKGDPLVFDTDEFPRPGTTAETLGRLRPAFDKQGTVTAGNASGINDGAAMVVVMKESKAKELGLTPMARLVAFSSAGVDPAIMGTGPIPASTDCLKKAGWAPADLDLVEANEAFAAQAMSVNQEMGWDLSKVNVNGGAIAIGHPIGASGARVLVTLLYEMQKRDAKKGLATLCIGGGQGVALAVERL</sequence>
<reference key="1">
    <citation type="journal article" date="1993" name="Appl. Microbiol. Biotechnol.">
        <title>Cloning and molecular analysis of the poly(3-hydroxybutyric acid) biosynthetic genes of Thiocystis violacea.</title>
        <authorList>
            <person name="Liebergesell M."/>
            <person name="Steinbuechel A."/>
        </authorList>
    </citation>
    <scope>NUCLEOTIDE SEQUENCE [GENOMIC DNA]</scope>
    <scope>PATHWAY</scope>
    <source>
        <strain>2311 / DSM 208</strain>
    </source>
</reference>
<reference key="2">
    <citation type="journal article" date="1992" name="FEMS Microbiol. Rev.">
        <title>Molecular basis for biosynthesis and accumulation of polyhydroxyalkanoic acids in bacteria.</title>
        <authorList>
            <person name="Steinbuechel A."/>
            <person name="Hustede E."/>
            <person name="Liebergesell M."/>
            <person name="Pieper U."/>
            <person name="Timm A."/>
            <person name="Valentin H."/>
        </authorList>
    </citation>
    <scope>GENE NAME</scope>
</reference>
<accession>P45363</accession>
<evidence type="ECO:0000250" key="1"/>
<evidence type="ECO:0000250" key="2">
    <source>
        <dbReference type="UniProtKB" id="P14611"/>
    </source>
</evidence>
<evidence type="ECO:0000255" key="3">
    <source>
        <dbReference type="PROSITE-ProRule" id="PRU10020"/>
    </source>
</evidence>
<evidence type="ECO:0000269" key="4">
    <source>
    </source>
</evidence>
<evidence type="ECO:0000303" key="5">
    <source>
    </source>
</evidence>
<evidence type="ECO:0000303" key="6">
    <source>
    </source>
</evidence>
<evidence type="ECO:0000305" key="7"/>
<comment type="catalytic activity">
    <reaction evidence="3">
        <text>2 acetyl-CoA = acetoacetyl-CoA + CoA</text>
        <dbReference type="Rhea" id="RHEA:21036"/>
        <dbReference type="ChEBI" id="CHEBI:57286"/>
        <dbReference type="ChEBI" id="CHEBI:57287"/>
        <dbReference type="ChEBI" id="CHEBI:57288"/>
        <dbReference type="EC" id="2.3.1.9"/>
    </reaction>
</comment>
<comment type="pathway">
    <text evidence="4">Biopolymer metabolism; poly-(R)-3-hydroxybutanoate biosynthesis.</text>
</comment>
<comment type="pathway">
    <text>Metabolic intermediate biosynthesis; (R)-mevalonate biosynthesis; (R)-mevalonate from acetyl-CoA: step 1/3.</text>
</comment>
<comment type="subunit">
    <text evidence="2">Homotetramer.</text>
</comment>
<comment type="subcellular location">
    <subcellularLocation>
        <location>Cytoplasm</location>
    </subcellularLocation>
</comment>
<comment type="similarity">
    <text evidence="7">Belongs to the thiolase-like superfamily. Thiolase family.</text>
</comment>
<dbReference type="EC" id="2.3.1.9"/>
<dbReference type="EMBL" id="L01113">
    <property type="protein sequence ID" value="AAB02860.1"/>
    <property type="molecule type" value="Genomic_DNA"/>
</dbReference>
<dbReference type="EMBL" id="S54369">
    <property type="protein sequence ID" value="AAC60428.2"/>
    <property type="molecule type" value="Genomic_DNA"/>
</dbReference>
<dbReference type="PIR" id="B48376">
    <property type="entry name" value="B48376"/>
</dbReference>
<dbReference type="RefSeq" id="WP_200330237.1">
    <property type="nucleotide sequence ID" value="NZ_NRRF01000016.1"/>
</dbReference>
<dbReference type="SMR" id="P45363"/>
<dbReference type="UniPathway" id="UPA00058">
    <property type="reaction ID" value="UER00101"/>
</dbReference>
<dbReference type="UniPathway" id="UPA00917"/>
<dbReference type="GO" id="GO:0005737">
    <property type="term" value="C:cytoplasm"/>
    <property type="evidence" value="ECO:0007669"/>
    <property type="project" value="UniProtKB-SubCell"/>
</dbReference>
<dbReference type="GO" id="GO:0003985">
    <property type="term" value="F:acetyl-CoA C-acetyltransferase activity"/>
    <property type="evidence" value="ECO:0007669"/>
    <property type="project" value="UniProtKB-EC"/>
</dbReference>
<dbReference type="GO" id="GO:0042619">
    <property type="term" value="P:poly-hydroxybutyrate biosynthetic process"/>
    <property type="evidence" value="ECO:0007669"/>
    <property type="project" value="UniProtKB-KW"/>
</dbReference>
<dbReference type="CDD" id="cd00751">
    <property type="entry name" value="thiolase"/>
    <property type="match status" value="1"/>
</dbReference>
<dbReference type="FunFam" id="3.40.47.10:FF:000010">
    <property type="entry name" value="Acetyl-CoA acetyltransferase (Thiolase)"/>
    <property type="match status" value="1"/>
</dbReference>
<dbReference type="Gene3D" id="3.40.47.10">
    <property type="match status" value="2"/>
</dbReference>
<dbReference type="InterPro" id="IPR002155">
    <property type="entry name" value="Thiolase"/>
</dbReference>
<dbReference type="InterPro" id="IPR016039">
    <property type="entry name" value="Thiolase-like"/>
</dbReference>
<dbReference type="InterPro" id="IPR020615">
    <property type="entry name" value="Thiolase_acyl_enz_int_AS"/>
</dbReference>
<dbReference type="InterPro" id="IPR020610">
    <property type="entry name" value="Thiolase_AS"/>
</dbReference>
<dbReference type="InterPro" id="IPR020617">
    <property type="entry name" value="Thiolase_C"/>
</dbReference>
<dbReference type="InterPro" id="IPR020613">
    <property type="entry name" value="Thiolase_CS"/>
</dbReference>
<dbReference type="InterPro" id="IPR020616">
    <property type="entry name" value="Thiolase_N"/>
</dbReference>
<dbReference type="NCBIfam" id="TIGR01930">
    <property type="entry name" value="AcCoA-C-Actrans"/>
    <property type="match status" value="1"/>
</dbReference>
<dbReference type="PANTHER" id="PTHR18919:SF107">
    <property type="entry name" value="ACETYL-COA ACETYLTRANSFERASE, CYTOSOLIC"/>
    <property type="match status" value="1"/>
</dbReference>
<dbReference type="PANTHER" id="PTHR18919">
    <property type="entry name" value="ACETYL-COA C-ACYLTRANSFERASE"/>
    <property type="match status" value="1"/>
</dbReference>
<dbReference type="Pfam" id="PF02803">
    <property type="entry name" value="Thiolase_C"/>
    <property type="match status" value="1"/>
</dbReference>
<dbReference type="Pfam" id="PF00108">
    <property type="entry name" value="Thiolase_N"/>
    <property type="match status" value="1"/>
</dbReference>
<dbReference type="PIRSF" id="PIRSF000429">
    <property type="entry name" value="Ac-CoA_Ac_transf"/>
    <property type="match status" value="1"/>
</dbReference>
<dbReference type="SUPFAM" id="SSF53901">
    <property type="entry name" value="Thiolase-like"/>
    <property type="match status" value="2"/>
</dbReference>
<dbReference type="PROSITE" id="PS00098">
    <property type="entry name" value="THIOLASE_1"/>
    <property type="match status" value="1"/>
</dbReference>
<dbReference type="PROSITE" id="PS00737">
    <property type="entry name" value="THIOLASE_2"/>
    <property type="match status" value="1"/>
</dbReference>
<dbReference type="PROSITE" id="PS00099">
    <property type="entry name" value="THIOLASE_3"/>
    <property type="match status" value="1"/>
</dbReference>